<keyword id="KW-0010">Activator</keyword>
<keyword id="KW-0238">DNA-binding</keyword>
<keyword id="KW-0936">Ethylene signaling pathway</keyword>
<keyword id="KW-0539">Nucleus</keyword>
<keyword id="KW-1185">Reference proteome</keyword>
<keyword id="KW-0804">Transcription</keyword>
<keyword id="KW-0805">Transcription regulation</keyword>
<feature type="chain" id="PRO_0000290372" description="Ethylene-responsive transcription factor ERF010">
    <location>
        <begin position="1"/>
        <end position="184"/>
    </location>
</feature>
<feature type="DNA-binding region" description="AP2/ERF" evidence="2">
    <location>
        <begin position="20"/>
        <end position="77"/>
    </location>
</feature>
<feature type="region of interest" description="Disordered" evidence="3">
    <location>
        <begin position="123"/>
        <end position="184"/>
    </location>
</feature>
<feature type="compositionally biased region" description="Basic and acidic residues" evidence="3">
    <location>
        <begin position="161"/>
        <end position="172"/>
    </location>
</feature>
<feature type="compositionally biased region" description="Acidic residues" evidence="3">
    <location>
        <begin position="174"/>
        <end position="184"/>
    </location>
</feature>
<feature type="sequence conflict" description="In Ref. 1; AAT44927." evidence="4" ref="1">
    <original>F</original>
    <variation>L</variation>
    <location>
        <position position="121"/>
    </location>
</feature>
<evidence type="ECO:0000250" key="1"/>
<evidence type="ECO:0000255" key="2">
    <source>
        <dbReference type="PROSITE-ProRule" id="PRU00366"/>
    </source>
</evidence>
<evidence type="ECO:0000256" key="3">
    <source>
        <dbReference type="SAM" id="MobiDB-lite"/>
    </source>
</evidence>
<evidence type="ECO:0000305" key="4"/>
<protein>
    <recommendedName>
        <fullName>Ethylene-responsive transcription factor ERF010</fullName>
    </recommendedName>
</protein>
<proteinExistence type="evidence at transcript level"/>
<reference key="1">
    <citation type="submission" date="2004-02" db="EMBL/GenBank/DDBJ databases">
        <title>Molecular cloning, expression, phylogenetic and functional characterization of the Arabidopsis AP2/EREBP transcription factor family.</title>
        <authorList>
            <person name="Pan Y."/>
            <person name="Gong W."/>
            <person name="Liu D."/>
            <person name="Fu Q."/>
            <person name="Mei W.-Q."/>
            <person name="Song W.-Q."/>
            <person name="Ma L.-G."/>
            <person name="Luo J.-C."/>
            <person name="Deng X.-W."/>
            <person name="Zhu Y.-X."/>
        </authorList>
    </citation>
    <scope>NUCLEOTIDE SEQUENCE [MRNA]</scope>
</reference>
<reference key="2">
    <citation type="journal article" date="2000" name="DNA Res.">
        <title>Structural analysis of Arabidopsis thaliana chromosome 5. X. Sequence features of the regions of 3,076,755 bp covered by sixty P1 and TAC clones.</title>
        <authorList>
            <person name="Sato S."/>
            <person name="Nakamura Y."/>
            <person name="Kaneko T."/>
            <person name="Katoh T."/>
            <person name="Asamizu E."/>
            <person name="Kotani H."/>
            <person name="Tabata S."/>
        </authorList>
    </citation>
    <scope>NUCLEOTIDE SEQUENCE [LARGE SCALE GENOMIC DNA]</scope>
    <source>
        <strain>cv. Columbia</strain>
    </source>
</reference>
<reference key="3">
    <citation type="journal article" date="2017" name="Plant J.">
        <title>Araport11: a complete reannotation of the Arabidopsis thaliana reference genome.</title>
        <authorList>
            <person name="Cheng C.Y."/>
            <person name="Krishnakumar V."/>
            <person name="Chan A.P."/>
            <person name="Thibaud-Nissen F."/>
            <person name="Schobel S."/>
            <person name="Town C.D."/>
        </authorList>
    </citation>
    <scope>GENOME REANNOTATION</scope>
    <source>
        <strain>cv. Columbia</strain>
    </source>
</reference>
<reference key="4">
    <citation type="journal article" date="2006" name="Plant Biotechnol. J.">
        <title>Simultaneous high-throughput recombinational cloning of open reading frames in closed and open configurations.</title>
        <authorList>
            <person name="Underwood B.A."/>
            <person name="Vanderhaeghen R."/>
            <person name="Whitford R."/>
            <person name="Town C.D."/>
            <person name="Hilson P."/>
        </authorList>
    </citation>
    <scope>NUCLEOTIDE SEQUENCE [LARGE SCALE MRNA]</scope>
    <source>
        <strain>cv. Columbia</strain>
    </source>
</reference>
<reference key="5">
    <citation type="submission" date="2006-06" db="EMBL/GenBank/DDBJ databases">
        <title>Arabidopsis ORF clones.</title>
        <authorList>
            <person name="Kim C.J."/>
            <person name="Chen H."/>
            <person name="Quinitio C."/>
            <person name="Shinn P."/>
            <person name="Ecker J.R."/>
        </authorList>
    </citation>
    <scope>NUCLEOTIDE SEQUENCE [LARGE SCALE MRNA]</scope>
    <source>
        <strain>cv. Columbia</strain>
    </source>
</reference>
<reference key="6">
    <citation type="journal article" date="2006" name="Plant Physiol.">
        <title>Genome-wide analysis of the ERF gene family in Arabidopsis and rice.</title>
        <authorList>
            <person name="Nakano T."/>
            <person name="Suzuki K."/>
            <person name="Fujimura T."/>
            <person name="Shinshi H."/>
        </authorList>
    </citation>
    <scope>GENE FAMILY</scope>
    <scope>NOMENCLATURE</scope>
</reference>
<dbReference type="EMBL" id="AY560860">
    <property type="protein sequence ID" value="AAT44927.1"/>
    <property type="molecule type" value="mRNA"/>
</dbReference>
<dbReference type="EMBL" id="AB020742">
    <property type="protein sequence ID" value="BAB10953.1"/>
    <property type="molecule type" value="Genomic_DNA"/>
</dbReference>
<dbReference type="EMBL" id="CP002688">
    <property type="protein sequence ID" value="AED98312.1"/>
    <property type="molecule type" value="Genomic_DNA"/>
</dbReference>
<dbReference type="EMBL" id="DQ447114">
    <property type="protein sequence ID" value="ABE66280.1"/>
    <property type="molecule type" value="mRNA"/>
</dbReference>
<dbReference type="EMBL" id="DQ653394">
    <property type="protein sequence ID" value="ABK28777.1"/>
    <property type="status" value="ALT_SEQ"/>
    <property type="molecule type" value="mRNA"/>
</dbReference>
<dbReference type="EMBL" id="BT025744">
    <property type="protein sequence ID" value="ABF83634.1"/>
    <property type="molecule type" value="mRNA"/>
</dbReference>
<dbReference type="SMR" id="Q9FH94"/>
<dbReference type="FunCoup" id="Q9FH94">
    <property type="interactions" value="63"/>
</dbReference>
<dbReference type="STRING" id="3702.Q9FH94"/>
<dbReference type="PaxDb" id="3702-AT5G67190.1"/>
<dbReference type="ProteomicsDB" id="221853"/>
<dbReference type="EnsemblPlants" id="AT5G67190.1">
    <property type="protein sequence ID" value="AT5G67190.1"/>
    <property type="gene ID" value="AT5G67190"/>
</dbReference>
<dbReference type="GeneID" id="836854"/>
<dbReference type="Gramene" id="AT5G67190.1">
    <property type="protein sequence ID" value="AT5G67190.1"/>
    <property type="gene ID" value="AT5G67190"/>
</dbReference>
<dbReference type="KEGG" id="ath:AT5G67190"/>
<dbReference type="Araport" id="AT5G67190"/>
<dbReference type="TAIR" id="AT5G67190">
    <property type="gene designation" value="DEAR2"/>
</dbReference>
<dbReference type="eggNOG" id="ENOG502S0BY">
    <property type="taxonomic scope" value="Eukaryota"/>
</dbReference>
<dbReference type="HOGENOM" id="CLU_063331_7_2_1"/>
<dbReference type="InParanoid" id="Q9FH94"/>
<dbReference type="OMA" id="HRNYQNG"/>
<dbReference type="OrthoDB" id="1937547at2759"/>
<dbReference type="PhylomeDB" id="Q9FH94"/>
<dbReference type="PRO" id="PR:Q9FH94"/>
<dbReference type="Proteomes" id="UP000006548">
    <property type="component" value="Chromosome 5"/>
</dbReference>
<dbReference type="ExpressionAtlas" id="Q9FH94">
    <property type="expression patterns" value="baseline and differential"/>
</dbReference>
<dbReference type="GO" id="GO:0005634">
    <property type="term" value="C:nucleus"/>
    <property type="evidence" value="ECO:0007669"/>
    <property type="project" value="UniProtKB-SubCell"/>
</dbReference>
<dbReference type="GO" id="GO:0003700">
    <property type="term" value="F:DNA-binding transcription factor activity"/>
    <property type="evidence" value="ECO:0000250"/>
    <property type="project" value="TAIR"/>
</dbReference>
<dbReference type="GO" id="GO:0000976">
    <property type="term" value="F:transcription cis-regulatory region binding"/>
    <property type="evidence" value="ECO:0000353"/>
    <property type="project" value="TAIR"/>
</dbReference>
<dbReference type="GO" id="GO:0009873">
    <property type="term" value="P:ethylene-activated signaling pathway"/>
    <property type="evidence" value="ECO:0007669"/>
    <property type="project" value="UniProtKB-KW"/>
</dbReference>
<dbReference type="CDD" id="cd00018">
    <property type="entry name" value="AP2"/>
    <property type="match status" value="1"/>
</dbReference>
<dbReference type="FunFam" id="3.30.730.10:FF:000001">
    <property type="entry name" value="Ethylene-responsive transcription factor 2"/>
    <property type="match status" value="1"/>
</dbReference>
<dbReference type="Gene3D" id="3.30.730.10">
    <property type="entry name" value="AP2/ERF domain"/>
    <property type="match status" value="1"/>
</dbReference>
<dbReference type="InterPro" id="IPR001471">
    <property type="entry name" value="AP2/ERF_dom"/>
</dbReference>
<dbReference type="InterPro" id="IPR036955">
    <property type="entry name" value="AP2/ERF_dom_sf"/>
</dbReference>
<dbReference type="InterPro" id="IPR016177">
    <property type="entry name" value="DNA-bd_dom_sf"/>
</dbReference>
<dbReference type="PANTHER" id="PTHR31729:SF8">
    <property type="entry name" value="ETHYLENE-RESPONSIVE TRANSCRIPTION FACTOR ERF010"/>
    <property type="match status" value="1"/>
</dbReference>
<dbReference type="PANTHER" id="PTHR31729">
    <property type="entry name" value="ETHYLENE-RESPONSIVE TRANSCRIPTION FACTOR RAP2-1-RELATED"/>
    <property type="match status" value="1"/>
</dbReference>
<dbReference type="Pfam" id="PF00847">
    <property type="entry name" value="AP2"/>
    <property type="match status" value="1"/>
</dbReference>
<dbReference type="PRINTS" id="PR00367">
    <property type="entry name" value="ETHRSPELEMNT"/>
</dbReference>
<dbReference type="SMART" id="SM00380">
    <property type="entry name" value="AP2"/>
    <property type="match status" value="1"/>
</dbReference>
<dbReference type="SUPFAM" id="SSF54171">
    <property type="entry name" value="DNA-binding domain"/>
    <property type="match status" value="1"/>
</dbReference>
<dbReference type="PROSITE" id="PS51032">
    <property type="entry name" value="AP2_ERF"/>
    <property type="match status" value="1"/>
</dbReference>
<organism>
    <name type="scientific">Arabidopsis thaliana</name>
    <name type="common">Mouse-ear cress</name>
    <dbReference type="NCBI Taxonomy" id="3702"/>
    <lineage>
        <taxon>Eukaryota</taxon>
        <taxon>Viridiplantae</taxon>
        <taxon>Streptophyta</taxon>
        <taxon>Embryophyta</taxon>
        <taxon>Tracheophyta</taxon>
        <taxon>Spermatophyta</taxon>
        <taxon>Magnoliopsida</taxon>
        <taxon>eudicotyledons</taxon>
        <taxon>Gunneridae</taxon>
        <taxon>Pentapetalae</taxon>
        <taxon>rosids</taxon>
        <taxon>malvids</taxon>
        <taxon>Brassicales</taxon>
        <taxon>Brassicaceae</taxon>
        <taxon>Camelineae</taxon>
        <taxon>Arabidopsis</taxon>
    </lineage>
</organism>
<name>ERF10_ARATH</name>
<gene>
    <name type="primary">ERF010</name>
    <name type="ordered locus">At5g67190</name>
    <name type="ORF">K21H1.15</name>
</gene>
<sequence>MEGGGVADVAVPGTRKRDRPYKGIRMRKWGKWVAEIREPNKRSRLWLGSYSTPEAAARAYDTAVFYLRGPTARLNFPELLPGEKFSDEDMSAATIRKKATEVGAQVDALGTAVQNNRHRVFGQNRDSDVDNKNFHRNYQNGEREEEEEDEDDKRLRSGGRLLDRVDLNKLPDPESSDEEWESKH</sequence>
<comment type="function">
    <text evidence="1">Probably acts as a transcriptional activator. Binds to the GCC-box pathogenesis-related promoter element. May be involved in the regulation of gene expression by stress factors and by components of stress signal transduction pathways (By similarity).</text>
</comment>
<comment type="subcellular location">
    <subcellularLocation>
        <location evidence="4">Nucleus</location>
    </subcellularLocation>
</comment>
<comment type="similarity">
    <text evidence="4">Belongs to the AP2/ERF transcription factor family. ERF subfamily.</text>
</comment>
<comment type="sequence caution" evidence="4">
    <conflict type="erroneous termination">
        <sequence resource="EMBL-CDS" id="ABK28777"/>
    </conflict>
    <text>Extended C-terminus.</text>
</comment>
<accession>Q9FH94</accession>
<accession>A0MFR7</accession>
<accession>Q6J9R5</accession>